<reference key="1">
    <citation type="journal article" date="2009" name="Stand. Genomic Sci.">
        <title>Complete genome sequence of Methanocorpusculum labreanum type strain Z.</title>
        <authorList>
            <person name="Anderson I.J."/>
            <person name="Sieprawska-Lupa M."/>
            <person name="Goltsman E."/>
            <person name="Lapidus A."/>
            <person name="Copeland A."/>
            <person name="Glavina Del Rio T."/>
            <person name="Tice H."/>
            <person name="Dalin E."/>
            <person name="Barry K."/>
            <person name="Pitluck S."/>
            <person name="Hauser L."/>
            <person name="Land M."/>
            <person name="Lucas S."/>
            <person name="Richardson P."/>
            <person name="Whitman W.B."/>
            <person name="Kyrpides N.C."/>
        </authorList>
    </citation>
    <scope>NUCLEOTIDE SEQUENCE [LARGE SCALE GENOMIC DNA]</scope>
    <source>
        <strain>ATCC 43576 / DSM 4855 / Z</strain>
    </source>
</reference>
<protein>
    <recommendedName>
        <fullName evidence="1">Phosphoribosyl-ATP pyrophosphatase</fullName>
        <shortName evidence="1">PRA-PH</shortName>
        <ecNumber evidence="1">3.6.1.31</ecNumber>
    </recommendedName>
</protein>
<keyword id="KW-0028">Amino-acid biosynthesis</keyword>
<keyword id="KW-0067">ATP-binding</keyword>
<keyword id="KW-0963">Cytoplasm</keyword>
<keyword id="KW-0368">Histidine biosynthesis</keyword>
<keyword id="KW-0378">Hydrolase</keyword>
<keyword id="KW-0547">Nucleotide-binding</keyword>
<keyword id="KW-1185">Reference proteome</keyword>
<evidence type="ECO:0000255" key="1">
    <source>
        <dbReference type="HAMAP-Rule" id="MF_01020"/>
    </source>
</evidence>
<feature type="chain" id="PRO_0000319672" description="Phosphoribosyl-ATP pyrophosphatase">
    <location>
        <begin position="1"/>
        <end position="104"/>
    </location>
</feature>
<sequence>MTDAKVFDELWQVICERAASESLEKSYVRHLLFHEKGIDKSLEKVGEEAVEFILAAKNGVSEKTVGEAADLIFHMMVALKAADVDFDLVEEELAVRRAGMHLHD</sequence>
<dbReference type="EC" id="3.6.1.31" evidence="1"/>
<dbReference type="EMBL" id="CP000559">
    <property type="protein sequence ID" value="ABN07550.1"/>
    <property type="molecule type" value="Genomic_DNA"/>
</dbReference>
<dbReference type="RefSeq" id="WP_011833753.1">
    <property type="nucleotide sequence ID" value="NC_008942.1"/>
</dbReference>
<dbReference type="SMR" id="A2ST94"/>
<dbReference type="STRING" id="410358.Mlab_1384"/>
<dbReference type="GeneID" id="4794616"/>
<dbReference type="KEGG" id="mla:Mlab_1384"/>
<dbReference type="eggNOG" id="arCOG02677">
    <property type="taxonomic scope" value="Archaea"/>
</dbReference>
<dbReference type="HOGENOM" id="CLU_123337_0_0_2"/>
<dbReference type="OrthoDB" id="39686at2157"/>
<dbReference type="UniPathway" id="UPA00031">
    <property type="reaction ID" value="UER00007"/>
</dbReference>
<dbReference type="Proteomes" id="UP000000365">
    <property type="component" value="Chromosome"/>
</dbReference>
<dbReference type="GO" id="GO:0005737">
    <property type="term" value="C:cytoplasm"/>
    <property type="evidence" value="ECO:0007669"/>
    <property type="project" value="UniProtKB-SubCell"/>
</dbReference>
<dbReference type="GO" id="GO:0005524">
    <property type="term" value="F:ATP binding"/>
    <property type="evidence" value="ECO:0007669"/>
    <property type="project" value="UniProtKB-KW"/>
</dbReference>
<dbReference type="GO" id="GO:0004636">
    <property type="term" value="F:phosphoribosyl-ATP diphosphatase activity"/>
    <property type="evidence" value="ECO:0007669"/>
    <property type="project" value="UniProtKB-UniRule"/>
</dbReference>
<dbReference type="GO" id="GO:0000105">
    <property type="term" value="P:L-histidine biosynthetic process"/>
    <property type="evidence" value="ECO:0007669"/>
    <property type="project" value="UniProtKB-UniRule"/>
</dbReference>
<dbReference type="CDD" id="cd11534">
    <property type="entry name" value="NTP-PPase_HisIE_like"/>
    <property type="match status" value="1"/>
</dbReference>
<dbReference type="Gene3D" id="1.10.287.1080">
    <property type="entry name" value="MazG-like"/>
    <property type="match status" value="1"/>
</dbReference>
<dbReference type="HAMAP" id="MF_01020">
    <property type="entry name" value="HisE"/>
    <property type="match status" value="1"/>
</dbReference>
<dbReference type="InterPro" id="IPR008179">
    <property type="entry name" value="HisE"/>
</dbReference>
<dbReference type="InterPro" id="IPR021130">
    <property type="entry name" value="PRib-ATP_PPHydrolase-like"/>
</dbReference>
<dbReference type="NCBIfam" id="TIGR03188">
    <property type="entry name" value="histidine_hisI"/>
    <property type="match status" value="1"/>
</dbReference>
<dbReference type="PANTHER" id="PTHR42945">
    <property type="entry name" value="HISTIDINE BIOSYNTHESIS BIFUNCTIONAL PROTEIN"/>
    <property type="match status" value="1"/>
</dbReference>
<dbReference type="PANTHER" id="PTHR42945:SF1">
    <property type="entry name" value="HISTIDINE BIOSYNTHESIS BIFUNCTIONAL PROTEIN HIS7"/>
    <property type="match status" value="1"/>
</dbReference>
<dbReference type="Pfam" id="PF01503">
    <property type="entry name" value="PRA-PH"/>
    <property type="match status" value="1"/>
</dbReference>
<dbReference type="SUPFAM" id="SSF101386">
    <property type="entry name" value="all-alpha NTP pyrophosphatases"/>
    <property type="match status" value="1"/>
</dbReference>
<organism>
    <name type="scientific">Methanocorpusculum labreanum (strain ATCC 43576 / DSM 4855 / Z)</name>
    <dbReference type="NCBI Taxonomy" id="410358"/>
    <lineage>
        <taxon>Archaea</taxon>
        <taxon>Methanobacteriati</taxon>
        <taxon>Methanobacteriota</taxon>
        <taxon>Stenosarchaea group</taxon>
        <taxon>Methanomicrobia</taxon>
        <taxon>Methanomicrobiales</taxon>
        <taxon>Methanocorpusculaceae</taxon>
        <taxon>Methanocorpusculum</taxon>
    </lineage>
</organism>
<accession>A2ST94</accession>
<gene>
    <name evidence="1" type="primary">hisE</name>
    <name type="ordered locus">Mlab_1384</name>
</gene>
<proteinExistence type="inferred from homology"/>
<name>HIS2_METLZ</name>
<comment type="catalytic activity">
    <reaction evidence="1">
        <text>1-(5-phospho-beta-D-ribosyl)-ATP + H2O = 1-(5-phospho-beta-D-ribosyl)-5'-AMP + diphosphate + H(+)</text>
        <dbReference type="Rhea" id="RHEA:22828"/>
        <dbReference type="ChEBI" id="CHEBI:15377"/>
        <dbReference type="ChEBI" id="CHEBI:15378"/>
        <dbReference type="ChEBI" id="CHEBI:33019"/>
        <dbReference type="ChEBI" id="CHEBI:59457"/>
        <dbReference type="ChEBI" id="CHEBI:73183"/>
        <dbReference type="EC" id="3.6.1.31"/>
    </reaction>
</comment>
<comment type="pathway">
    <text evidence="1">Amino-acid biosynthesis; L-histidine biosynthesis; L-histidine from 5-phospho-alpha-D-ribose 1-diphosphate: step 2/9.</text>
</comment>
<comment type="subcellular location">
    <subcellularLocation>
        <location evidence="1">Cytoplasm</location>
    </subcellularLocation>
</comment>
<comment type="similarity">
    <text evidence="1">Belongs to the PRA-PH family.</text>
</comment>